<dbReference type="EC" id="2.4.2.-" evidence="1"/>
<dbReference type="EC" id="2.4.2.22" evidence="1"/>
<dbReference type="EMBL" id="CP000872">
    <property type="protein sequence ID" value="ABX62112.1"/>
    <property type="molecule type" value="Genomic_DNA"/>
</dbReference>
<dbReference type="RefSeq" id="WP_004688357.1">
    <property type="nucleotide sequence ID" value="NC_010103.1"/>
</dbReference>
<dbReference type="SMR" id="A9MB59"/>
<dbReference type="GeneID" id="97533692"/>
<dbReference type="KEGG" id="bcs:BCAN_A1060"/>
<dbReference type="HOGENOM" id="CLU_080904_3_0_5"/>
<dbReference type="PhylomeDB" id="A9MB59"/>
<dbReference type="UniPathway" id="UPA00602">
    <property type="reaction ID" value="UER00658"/>
</dbReference>
<dbReference type="UniPathway" id="UPA00909">
    <property type="reaction ID" value="UER00887"/>
</dbReference>
<dbReference type="PRO" id="PR:A9MB59"/>
<dbReference type="Proteomes" id="UP000001385">
    <property type="component" value="Chromosome I"/>
</dbReference>
<dbReference type="GO" id="GO:0005886">
    <property type="term" value="C:plasma membrane"/>
    <property type="evidence" value="ECO:0007669"/>
    <property type="project" value="UniProtKB-SubCell"/>
</dbReference>
<dbReference type="GO" id="GO:0052657">
    <property type="term" value="F:guanine phosphoribosyltransferase activity"/>
    <property type="evidence" value="ECO:0007669"/>
    <property type="project" value="RHEA"/>
</dbReference>
<dbReference type="GO" id="GO:0004422">
    <property type="term" value="F:hypoxanthine phosphoribosyltransferase activity"/>
    <property type="evidence" value="ECO:0007669"/>
    <property type="project" value="RHEA"/>
</dbReference>
<dbReference type="GO" id="GO:0000287">
    <property type="term" value="F:magnesium ion binding"/>
    <property type="evidence" value="ECO:0007669"/>
    <property type="project" value="UniProtKB-UniRule"/>
</dbReference>
<dbReference type="GO" id="GO:0000310">
    <property type="term" value="F:xanthine phosphoribosyltransferase activity"/>
    <property type="evidence" value="ECO:0007669"/>
    <property type="project" value="UniProtKB-UniRule"/>
</dbReference>
<dbReference type="GO" id="GO:0032263">
    <property type="term" value="P:GMP salvage"/>
    <property type="evidence" value="ECO:0007669"/>
    <property type="project" value="UniProtKB-UniRule"/>
</dbReference>
<dbReference type="GO" id="GO:0006166">
    <property type="term" value="P:purine ribonucleoside salvage"/>
    <property type="evidence" value="ECO:0007669"/>
    <property type="project" value="UniProtKB-KW"/>
</dbReference>
<dbReference type="GO" id="GO:0032265">
    <property type="term" value="P:XMP salvage"/>
    <property type="evidence" value="ECO:0007669"/>
    <property type="project" value="UniProtKB-UniRule"/>
</dbReference>
<dbReference type="CDD" id="cd06223">
    <property type="entry name" value="PRTases_typeI"/>
    <property type="match status" value="1"/>
</dbReference>
<dbReference type="Gene3D" id="3.40.50.2020">
    <property type="match status" value="1"/>
</dbReference>
<dbReference type="HAMAP" id="MF_01903">
    <property type="entry name" value="XGPRT"/>
    <property type="match status" value="1"/>
</dbReference>
<dbReference type="InterPro" id="IPR000836">
    <property type="entry name" value="PRibTrfase_dom"/>
</dbReference>
<dbReference type="InterPro" id="IPR029057">
    <property type="entry name" value="PRTase-like"/>
</dbReference>
<dbReference type="InterPro" id="IPR023747">
    <property type="entry name" value="Xanthine_Guanine_PRibTrfase"/>
</dbReference>
<dbReference type="NCBIfam" id="NF006613">
    <property type="entry name" value="PRK09177.1"/>
    <property type="match status" value="1"/>
</dbReference>
<dbReference type="PANTHER" id="PTHR39563">
    <property type="entry name" value="XANTHINE PHOSPHORIBOSYLTRANSFERASE"/>
    <property type="match status" value="1"/>
</dbReference>
<dbReference type="PANTHER" id="PTHR39563:SF1">
    <property type="entry name" value="XANTHINE-GUANINE PHOSPHORIBOSYLTRANSFERASE"/>
    <property type="match status" value="1"/>
</dbReference>
<dbReference type="Pfam" id="PF00156">
    <property type="entry name" value="Pribosyltran"/>
    <property type="match status" value="1"/>
</dbReference>
<dbReference type="SUPFAM" id="SSF53271">
    <property type="entry name" value="PRTase-like"/>
    <property type="match status" value="1"/>
</dbReference>
<name>XGPT_BRUC2</name>
<proteinExistence type="inferred from homology"/>
<reference key="1">
    <citation type="submission" date="2007-10" db="EMBL/GenBank/DDBJ databases">
        <title>Brucella canis ATCC 23365 whole genome shotgun sequencing project.</title>
        <authorList>
            <person name="Setubal J.C."/>
            <person name="Bowns C."/>
            <person name="Boyle S."/>
            <person name="Crasta O.R."/>
            <person name="Czar M.J."/>
            <person name="Dharmanolla C."/>
            <person name="Gillespie J.J."/>
            <person name="Kenyon R.W."/>
            <person name="Lu J."/>
            <person name="Mane S."/>
            <person name="Mohapatra S."/>
            <person name="Nagrani S."/>
            <person name="Purkayastha A."/>
            <person name="Rajasimha H.K."/>
            <person name="Shallom J.M."/>
            <person name="Shallom S."/>
            <person name="Shukla M."/>
            <person name="Snyder E.E."/>
            <person name="Sobral B.W."/>
            <person name="Wattam A.R."/>
            <person name="Will R."/>
            <person name="Williams K."/>
            <person name="Yoo H."/>
            <person name="Bruce D."/>
            <person name="Detter C."/>
            <person name="Munk C."/>
            <person name="Brettin T.S."/>
        </authorList>
    </citation>
    <scope>NUCLEOTIDE SEQUENCE [LARGE SCALE GENOMIC DNA]</scope>
    <source>
        <strain>ATCC 23365 / NCTC 10854 / RM-666</strain>
    </source>
</reference>
<evidence type="ECO:0000255" key="1">
    <source>
        <dbReference type="HAMAP-Rule" id="MF_01903"/>
    </source>
</evidence>
<accession>A9MB59</accession>
<gene>
    <name evidence="1" type="primary">gpt</name>
    <name type="ordered locus">BCAN_A1060</name>
</gene>
<feature type="chain" id="PRO_1000088471" description="Xanthine-guanine phosphoribosyltransferase">
    <location>
        <begin position="1"/>
        <end position="165"/>
    </location>
</feature>
<feature type="binding site" evidence="1">
    <location>
        <begin position="41"/>
        <end position="42"/>
    </location>
    <ligand>
        <name>5-phospho-alpha-D-ribose 1-diphosphate</name>
        <dbReference type="ChEBI" id="CHEBI:58017"/>
    </ligand>
</feature>
<feature type="binding site" evidence="1">
    <location>
        <begin position="98"/>
        <end position="106"/>
    </location>
    <ligand>
        <name>5-phospho-alpha-D-ribose 1-diphosphate</name>
        <dbReference type="ChEBI" id="CHEBI:58017"/>
    </ligand>
</feature>
<feature type="binding site" evidence="1">
    <location>
        <position position="99"/>
    </location>
    <ligand>
        <name>Mg(2+)</name>
        <dbReference type="ChEBI" id="CHEBI:18420"/>
    </ligand>
</feature>
<feature type="binding site" evidence="1">
    <location>
        <begin position="102"/>
        <end position="106"/>
    </location>
    <ligand>
        <name>GMP</name>
        <dbReference type="ChEBI" id="CHEBI:58115"/>
    </ligand>
</feature>
<feature type="binding site" evidence="1">
    <location>
        <position position="102"/>
    </location>
    <ligand>
        <name>guanine</name>
        <dbReference type="ChEBI" id="CHEBI:16235"/>
    </ligand>
</feature>
<feature type="binding site" evidence="1">
    <location>
        <position position="102"/>
    </location>
    <ligand>
        <name>xanthine</name>
        <dbReference type="ChEBI" id="CHEBI:17712"/>
    </ligand>
</feature>
<feature type="binding site" evidence="1">
    <location>
        <begin position="144"/>
        <end position="145"/>
    </location>
    <ligand>
        <name>GMP</name>
        <dbReference type="ChEBI" id="CHEBI:58115"/>
    </ligand>
</feature>
<feature type="binding site" evidence="1">
    <location>
        <position position="145"/>
    </location>
    <ligand>
        <name>guanine</name>
        <dbReference type="ChEBI" id="CHEBI:16235"/>
    </ligand>
</feature>
<feature type="binding site" evidence="1">
    <location>
        <position position="145"/>
    </location>
    <ligand>
        <name>xanthine</name>
        <dbReference type="ChEBI" id="CHEBI:17712"/>
    </ligand>
</feature>
<organism>
    <name type="scientific">Brucella canis (strain ATCC 23365 / NCTC 10854 / RM-666)</name>
    <dbReference type="NCBI Taxonomy" id="483179"/>
    <lineage>
        <taxon>Bacteria</taxon>
        <taxon>Pseudomonadati</taxon>
        <taxon>Pseudomonadota</taxon>
        <taxon>Alphaproteobacteria</taxon>
        <taxon>Hyphomicrobiales</taxon>
        <taxon>Brucellaceae</taxon>
        <taxon>Brucella/Ochrobactrum group</taxon>
        <taxon>Brucella</taxon>
    </lineage>
</organism>
<sequence>MSLPDKAFPVSWDQFHRDARALAWRIAGLDREWRAIVAITRGGLVPAAIICRELGIRLIETVCIASYHDYTSQGEMQVLKGIGASLLENQGEGVIVVDDLTDTGKTAAIVREMMPRAHFATVYAKPKGRPLIDTFVTEVSQDTWIYFPWDMGFTYQEPIAGGKRG</sequence>
<protein>
    <recommendedName>
        <fullName evidence="1">Xanthine-guanine phosphoribosyltransferase</fullName>
        <shortName evidence="1">XGPRT</shortName>
        <ecNumber evidence="1">2.4.2.-</ecNumber>
        <ecNumber evidence="1">2.4.2.22</ecNumber>
    </recommendedName>
    <alternativeName>
        <fullName evidence="1">Xanthine phosphoribosyltransferase</fullName>
    </alternativeName>
</protein>
<keyword id="KW-0997">Cell inner membrane</keyword>
<keyword id="KW-1003">Cell membrane</keyword>
<keyword id="KW-0328">Glycosyltransferase</keyword>
<keyword id="KW-0460">Magnesium</keyword>
<keyword id="KW-0472">Membrane</keyword>
<keyword id="KW-0479">Metal-binding</keyword>
<keyword id="KW-0660">Purine salvage</keyword>
<keyword id="KW-1185">Reference proteome</keyword>
<keyword id="KW-0808">Transferase</keyword>
<comment type="function">
    <text evidence="1">Purine salvage pathway enzyme that catalyzes the transfer of the ribosyl-5-phosphate group from 5-phospho-alpha-D-ribose 1-diphosphate (PRPP) to the N9 position of the 6-oxopurines guanine and xanthine to form the corresponding ribonucleotides GMP (guanosine 5'-monophosphate) and XMP (xanthosine 5'-monophosphate), with the release of PPi. To a lesser extent, also acts on hypoxanthine.</text>
</comment>
<comment type="catalytic activity">
    <reaction evidence="1">
        <text>GMP + diphosphate = guanine + 5-phospho-alpha-D-ribose 1-diphosphate</text>
        <dbReference type="Rhea" id="RHEA:25424"/>
        <dbReference type="ChEBI" id="CHEBI:16235"/>
        <dbReference type="ChEBI" id="CHEBI:33019"/>
        <dbReference type="ChEBI" id="CHEBI:58017"/>
        <dbReference type="ChEBI" id="CHEBI:58115"/>
    </reaction>
    <physiologicalReaction direction="right-to-left" evidence="1">
        <dbReference type="Rhea" id="RHEA:25426"/>
    </physiologicalReaction>
</comment>
<comment type="catalytic activity">
    <reaction evidence="1">
        <text>XMP + diphosphate = xanthine + 5-phospho-alpha-D-ribose 1-diphosphate</text>
        <dbReference type="Rhea" id="RHEA:10800"/>
        <dbReference type="ChEBI" id="CHEBI:17712"/>
        <dbReference type="ChEBI" id="CHEBI:33019"/>
        <dbReference type="ChEBI" id="CHEBI:57464"/>
        <dbReference type="ChEBI" id="CHEBI:58017"/>
        <dbReference type="EC" id="2.4.2.22"/>
    </reaction>
    <physiologicalReaction direction="right-to-left" evidence="1">
        <dbReference type="Rhea" id="RHEA:10802"/>
    </physiologicalReaction>
</comment>
<comment type="catalytic activity">
    <reaction evidence="1">
        <text>IMP + diphosphate = hypoxanthine + 5-phospho-alpha-D-ribose 1-diphosphate</text>
        <dbReference type="Rhea" id="RHEA:17973"/>
        <dbReference type="ChEBI" id="CHEBI:17368"/>
        <dbReference type="ChEBI" id="CHEBI:33019"/>
        <dbReference type="ChEBI" id="CHEBI:58017"/>
        <dbReference type="ChEBI" id="CHEBI:58053"/>
    </reaction>
    <physiologicalReaction direction="right-to-left" evidence="1">
        <dbReference type="Rhea" id="RHEA:17975"/>
    </physiologicalReaction>
</comment>
<comment type="cofactor">
    <cofactor evidence="1">
        <name>Mg(2+)</name>
        <dbReference type="ChEBI" id="CHEBI:18420"/>
    </cofactor>
</comment>
<comment type="pathway">
    <text evidence="1">Purine metabolism; GMP biosynthesis via salvage pathway; GMP from guanine: step 1/1.</text>
</comment>
<comment type="pathway">
    <text evidence="1">Purine metabolism; XMP biosynthesis via salvage pathway; XMP from xanthine: step 1/1.</text>
</comment>
<comment type="subunit">
    <text evidence="1">Homotetramer.</text>
</comment>
<comment type="subcellular location">
    <subcellularLocation>
        <location evidence="1">Cell inner membrane</location>
        <topology evidence="1">Peripheral membrane protein</topology>
    </subcellularLocation>
</comment>
<comment type="similarity">
    <text evidence="1">Belongs to the purine/pyrimidine phosphoribosyltransferase family. XGPT subfamily.</text>
</comment>